<accession>Q8ZM86</accession>
<protein>
    <recommendedName>
        <fullName>tRNA(fMet)-specific endonuclease VapC</fullName>
        <ecNumber>3.1.-.-</ecNumber>
    </recommendedName>
    <alternativeName>
        <fullName>RNase VapC</fullName>
    </alternativeName>
    <alternativeName>
        <fullName>Toxin VapC</fullName>
    </alternativeName>
</protein>
<gene>
    <name type="primary">vapC</name>
    <name type="ordered locus">STM3033</name>
</gene>
<feature type="chain" id="PRO_0000410980" description="tRNA(fMet)-specific endonuclease VapC">
    <location>
        <begin position="1"/>
        <end position="132"/>
    </location>
</feature>
<feature type="domain" description="PINc">
    <location>
        <begin position="5"/>
        <end position="131"/>
    </location>
</feature>
<feature type="binding site" evidence="1">
    <location>
        <position position="7"/>
    </location>
    <ligand>
        <name>Mg(2+)</name>
        <dbReference type="ChEBI" id="CHEBI:18420"/>
    </ligand>
</feature>
<feature type="binding site" evidence="1">
    <location>
        <position position="98"/>
    </location>
    <ligand>
        <name>Mg(2+)</name>
        <dbReference type="ChEBI" id="CHEBI:18420"/>
    </ligand>
</feature>
<feature type="mutagenesis site" description="No inhibition of cell growth, no degradation of tRNA(fMet)." evidence="3">
    <original>D</original>
    <variation>A</variation>
    <location>
        <position position="7"/>
    </location>
</feature>
<feature type="strand" evidence="5">
    <location>
        <begin position="4"/>
        <end position="6"/>
    </location>
</feature>
<feature type="helix" evidence="5">
    <location>
        <begin position="8"/>
        <end position="17"/>
    </location>
</feature>
<feature type="helix" evidence="5">
    <location>
        <begin position="20"/>
        <end position="28"/>
    </location>
</feature>
<feature type="turn" evidence="5">
    <location>
        <begin position="29"/>
        <end position="31"/>
    </location>
</feature>
<feature type="strand" evidence="5">
    <location>
        <begin position="32"/>
        <end position="36"/>
    </location>
</feature>
<feature type="helix" evidence="5">
    <location>
        <begin position="37"/>
        <end position="49"/>
    </location>
</feature>
<feature type="strand" evidence="5">
    <location>
        <begin position="50"/>
        <end position="52"/>
    </location>
</feature>
<feature type="helix" evidence="5">
    <location>
        <begin position="53"/>
        <end position="65"/>
    </location>
</feature>
<feature type="strand" evidence="5">
    <location>
        <begin position="67"/>
        <end position="70"/>
    </location>
</feature>
<feature type="helix" evidence="5">
    <location>
        <begin position="74"/>
        <end position="89"/>
    </location>
</feature>
<feature type="helix" evidence="5">
    <location>
        <begin position="96"/>
        <end position="107"/>
    </location>
</feature>
<feature type="strand" evidence="5">
    <location>
        <begin position="111"/>
        <end position="113"/>
    </location>
</feature>
<feature type="helix" evidence="5">
    <location>
        <begin position="117"/>
        <end position="120"/>
    </location>
</feature>
<feature type="strand" evidence="5">
    <location>
        <begin position="127"/>
        <end position="129"/>
    </location>
</feature>
<reference key="1">
    <citation type="journal article" date="2001" name="Nature">
        <title>Complete genome sequence of Salmonella enterica serovar Typhimurium LT2.</title>
        <authorList>
            <person name="McClelland M."/>
            <person name="Sanderson K.E."/>
            <person name="Spieth J."/>
            <person name="Clifton S.W."/>
            <person name="Latreille P."/>
            <person name="Courtney L."/>
            <person name="Porwollik S."/>
            <person name="Ali J."/>
            <person name="Dante M."/>
            <person name="Du F."/>
            <person name="Hou S."/>
            <person name="Layman D."/>
            <person name="Leonard S."/>
            <person name="Nguyen C."/>
            <person name="Scott K."/>
            <person name="Holmes A."/>
            <person name="Grewal N."/>
            <person name="Mulvaney E."/>
            <person name="Ryan E."/>
            <person name="Sun H."/>
            <person name="Florea L."/>
            <person name="Miller W."/>
            <person name="Stoneking T."/>
            <person name="Nhan M."/>
            <person name="Waterston R."/>
            <person name="Wilson R.K."/>
        </authorList>
    </citation>
    <scope>NUCLEOTIDE SEQUENCE [LARGE SCALE GENOMIC DNA]</scope>
    <source>
        <strain>LT2 / SGSC1412 / ATCC 700720</strain>
    </source>
</reference>
<reference key="2">
    <citation type="journal article" date="2009" name="Mol. Microbiol.">
        <title>Ectopic production of VapCs from Enterobacteria inhibits translation and trans-activates YoeB mRNA interferase.</title>
        <authorList>
            <person name="Winther K.S."/>
            <person name="Gerdes K."/>
        </authorList>
    </citation>
    <scope>FUNCTION AS A TOXIN</scope>
    <scope>INDUCTION</scope>
    <scope>EXPRESSION IN E.COLI</scope>
    <source>
        <strain>LT2 / SGSC1412 / ATCC 700720</strain>
    </source>
</reference>
<reference key="3">
    <citation type="journal article" date="2011" name="Proc. Natl. Acad. Sci. U.S.A.">
        <title>Enteric virulence associated protein VapC inhibits translation by cleavage of initiator tRNA.</title>
        <authorList>
            <person name="Winther K.S."/>
            <person name="Gerdes K."/>
        </authorList>
    </citation>
    <scope>FUNCTION AS A TOXIN</scope>
    <scope>FUNCTION AS A TRNA ENDONUCLEASE</scope>
    <scope>SUBSTRATE SPECIFICITY</scope>
    <scope>MUTAGENESIS OF ASP-7</scope>
    <source>
        <strain>LT2 / SGSC1412 / ATCC 700720</strain>
    </source>
</reference>
<organism>
    <name type="scientific">Salmonella typhimurium (strain LT2 / SGSC1412 / ATCC 700720)</name>
    <dbReference type="NCBI Taxonomy" id="99287"/>
    <lineage>
        <taxon>Bacteria</taxon>
        <taxon>Pseudomonadati</taxon>
        <taxon>Pseudomonadota</taxon>
        <taxon>Gammaproteobacteria</taxon>
        <taxon>Enterobacterales</taxon>
        <taxon>Enterobacteriaceae</taxon>
        <taxon>Salmonella</taxon>
    </lineage>
</organism>
<comment type="function">
    <text>Toxic component of a type II toxin-antitoxin (TA) system. A site-specific tRNA-(fMet) endonuclease, it cleaves both charged and uncharged tRNA-(fMet) between positions 38 and 39 at the anticodon stem-loop boundary. Does not cleave tRNA(Met), tRNA(Arg2), tRNA(His), tRNA(Leu), tRNA(Phe) tRNA(Thr1), tRNA(Tyr) or tRNA(Val). Overexpression in E.coli inhibits translation, leads to loss of cell growth and degradation of tRNA(fMet), these effects are neutralized by expression of cognate antitoxin VapB. Expression also activates translation initiation at correctly positioned elongator codons (AAA and to a lesser extent AAG).</text>
</comment>
<comment type="function">
    <text>Ectopic overexpression in E.coli induces the YoeB toxin, but this is not the cause of VapC toxicity.</text>
</comment>
<comment type="cofactor">
    <cofactor evidence="4">
        <name>Mg(2+)</name>
        <dbReference type="ChEBI" id="CHEBI:18420"/>
    </cofactor>
</comment>
<comment type="subunit">
    <text evidence="4">Forms a complex with antitoxin VapB.</text>
</comment>
<comment type="induction">
    <text evidence="2">Induced by amino acid starvation and by chloramphenicol treatment.</text>
</comment>
<comment type="similarity">
    <text evidence="4">Belongs to the PINc/VapC protein family.</text>
</comment>
<evidence type="ECO:0000255" key="1"/>
<evidence type="ECO:0000269" key="2">
    <source>
    </source>
</evidence>
<evidence type="ECO:0000269" key="3">
    <source>
    </source>
</evidence>
<evidence type="ECO:0000305" key="4"/>
<evidence type="ECO:0007829" key="5">
    <source>
        <dbReference type="PDB" id="6IFC"/>
    </source>
</evidence>
<sequence>MLKFMLDTNTCIFTIKNKPEHIRERFNLNTSRMCISSITLMELIYGAEKSLAPERNLAVVEGFISRLEVLDYDTQAAIHTGQIRAELARKGTPVGPYDQMIAGHAGSRGLVVVTNNLREFERIPGIRIEDWC</sequence>
<name>VAPC_SALTY</name>
<proteinExistence type="evidence at protein level"/>
<dbReference type="EC" id="3.1.-.-"/>
<dbReference type="EMBL" id="AE006468">
    <property type="protein sequence ID" value="AAL21909.1"/>
    <property type="molecule type" value="Genomic_DNA"/>
</dbReference>
<dbReference type="RefSeq" id="NP_461950.1">
    <property type="nucleotide sequence ID" value="NC_003197.2"/>
</dbReference>
<dbReference type="RefSeq" id="WP_000911336.1">
    <property type="nucleotide sequence ID" value="NC_003197.2"/>
</dbReference>
<dbReference type="PDB" id="6IFC">
    <property type="method" value="X-ray"/>
    <property type="resolution" value="1.99 A"/>
    <property type="chains" value="A/C/E/G=1-132"/>
</dbReference>
<dbReference type="PDB" id="6IFM">
    <property type="method" value="X-ray"/>
    <property type="resolution" value="2.80 A"/>
    <property type="chains" value="A/C/E/G=1-132"/>
</dbReference>
<dbReference type="PDBsum" id="6IFC"/>
<dbReference type="PDBsum" id="6IFM"/>
<dbReference type="SMR" id="Q8ZM86"/>
<dbReference type="STRING" id="99287.STM3033"/>
<dbReference type="PaxDb" id="99287-STM3033"/>
<dbReference type="GeneID" id="1254556"/>
<dbReference type="KEGG" id="stm:STM3033"/>
<dbReference type="PATRIC" id="fig|99287.12.peg.3211"/>
<dbReference type="HOGENOM" id="CLU_118482_5_3_6"/>
<dbReference type="OMA" id="DTNTCIY"/>
<dbReference type="PhylomeDB" id="Q8ZM86"/>
<dbReference type="BioCyc" id="SENT99287:STM3033-MONOMER"/>
<dbReference type="Proteomes" id="UP000001014">
    <property type="component" value="Chromosome"/>
</dbReference>
<dbReference type="GO" id="GO:0000287">
    <property type="term" value="F:magnesium ion binding"/>
    <property type="evidence" value="ECO:0007669"/>
    <property type="project" value="UniProtKB-UniRule"/>
</dbReference>
<dbReference type="GO" id="GO:0004521">
    <property type="term" value="F:RNA endonuclease activity"/>
    <property type="evidence" value="ECO:0000318"/>
    <property type="project" value="GO_Central"/>
</dbReference>
<dbReference type="CDD" id="cd18745">
    <property type="entry name" value="PIN_VapC4-5_FitB-like"/>
    <property type="match status" value="1"/>
</dbReference>
<dbReference type="Gene3D" id="3.40.50.1010">
    <property type="entry name" value="5'-nuclease"/>
    <property type="match status" value="1"/>
</dbReference>
<dbReference type="HAMAP" id="MF_00265">
    <property type="entry name" value="VapC_Nob1"/>
    <property type="match status" value="1"/>
</dbReference>
<dbReference type="InterPro" id="IPR029060">
    <property type="entry name" value="PIN-like_dom_sf"/>
</dbReference>
<dbReference type="InterPro" id="IPR002716">
    <property type="entry name" value="PIN_dom"/>
</dbReference>
<dbReference type="InterPro" id="IPR050556">
    <property type="entry name" value="Type_II_TA_system_RNase"/>
</dbReference>
<dbReference type="InterPro" id="IPR022907">
    <property type="entry name" value="VapC_family"/>
</dbReference>
<dbReference type="NCBIfam" id="NF010285">
    <property type="entry name" value="PRK13725.1"/>
    <property type="match status" value="1"/>
</dbReference>
<dbReference type="PANTHER" id="PTHR33653">
    <property type="entry name" value="RIBONUCLEASE VAPC2"/>
    <property type="match status" value="1"/>
</dbReference>
<dbReference type="PANTHER" id="PTHR33653:SF1">
    <property type="entry name" value="RIBONUCLEASE VAPC2"/>
    <property type="match status" value="1"/>
</dbReference>
<dbReference type="Pfam" id="PF01850">
    <property type="entry name" value="PIN"/>
    <property type="match status" value="1"/>
</dbReference>
<dbReference type="SUPFAM" id="SSF88723">
    <property type="entry name" value="PIN domain-like"/>
    <property type="match status" value="1"/>
</dbReference>
<keyword id="KW-0002">3D-structure</keyword>
<keyword id="KW-0255">Endonuclease</keyword>
<keyword id="KW-0378">Hydrolase</keyword>
<keyword id="KW-0460">Magnesium</keyword>
<keyword id="KW-0479">Metal-binding</keyword>
<keyword id="KW-0540">Nuclease</keyword>
<keyword id="KW-1185">Reference proteome</keyword>
<keyword id="KW-1277">Toxin-antitoxin system</keyword>